<feature type="chain" id="PRO_0000216491" description="Putative gustatory receptor 10b">
    <location>
        <begin position="1"/>
        <end position="373"/>
    </location>
</feature>
<feature type="topological domain" description="Cytoplasmic" evidence="1">
    <location>
        <begin position="1"/>
        <end position="8"/>
    </location>
</feature>
<feature type="transmembrane region" description="Helical; Name=1" evidence="2">
    <location>
        <begin position="9"/>
        <end position="29"/>
    </location>
</feature>
<feature type="topological domain" description="Extracellular" evidence="1">
    <location>
        <begin position="30"/>
        <end position="82"/>
    </location>
</feature>
<feature type="transmembrane region" description="Helical; Name=2" evidence="2">
    <location>
        <begin position="83"/>
        <end position="103"/>
    </location>
</feature>
<feature type="topological domain" description="Cytoplasmic" evidence="1">
    <location>
        <begin position="104"/>
        <end position="132"/>
    </location>
</feature>
<feature type="transmembrane region" description="Helical; Name=3" evidence="2">
    <location>
        <begin position="133"/>
        <end position="153"/>
    </location>
</feature>
<feature type="topological domain" description="Extracellular" evidence="1">
    <location>
        <begin position="154"/>
        <end position="170"/>
    </location>
</feature>
<feature type="transmembrane region" description="Helical; Name=4" evidence="2">
    <location>
        <begin position="171"/>
        <end position="191"/>
    </location>
</feature>
<feature type="topological domain" description="Cytoplasmic" evidence="1">
    <location>
        <begin position="192"/>
        <end position="230"/>
    </location>
</feature>
<feature type="transmembrane region" description="Helical; Name=5" evidence="2">
    <location>
        <begin position="231"/>
        <end position="251"/>
    </location>
</feature>
<feature type="topological domain" description="Extracellular" evidence="1">
    <location>
        <begin position="252"/>
        <end position="273"/>
    </location>
</feature>
<feature type="transmembrane region" description="Helical; Name=6" evidence="2">
    <location>
        <begin position="274"/>
        <end position="294"/>
    </location>
</feature>
<feature type="topological domain" description="Cytoplasmic" evidence="1">
    <location>
        <begin position="295"/>
        <end position="350"/>
    </location>
</feature>
<feature type="transmembrane region" description="Helical; Name=7" evidence="2">
    <location>
        <begin position="351"/>
        <end position="371"/>
    </location>
</feature>
<feature type="topological domain" description="Extracellular" evidence="1">
    <location>
        <begin position="372"/>
        <end position="373"/>
    </location>
</feature>
<gene>
    <name type="primary">Gr10b</name>
    <name type="ORF">CG12622</name>
</gene>
<protein>
    <recommendedName>
        <fullName>Putative gustatory receptor 10b</fullName>
    </recommendedName>
</protein>
<name>GR10B_DROME</name>
<organism>
    <name type="scientific">Drosophila melanogaster</name>
    <name type="common">Fruit fly</name>
    <dbReference type="NCBI Taxonomy" id="7227"/>
    <lineage>
        <taxon>Eukaryota</taxon>
        <taxon>Metazoa</taxon>
        <taxon>Ecdysozoa</taxon>
        <taxon>Arthropoda</taxon>
        <taxon>Hexapoda</taxon>
        <taxon>Insecta</taxon>
        <taxon>Pterygota</taxon>
        <taxon>Neoptera</taxon>
        <taxon>Endopterygota</taxon>
        <taxon>Diptera</taxon>
        <taxon>Brachycera</taxon>
        <taxon>Muscomorpha</taxon>
        <taxon>Ephydroidea</taxon>
        <taxon>Drosophilidae</taxon>
        <taxon>Drosophila</taxon>
        <taxon>Sophophora</taxon>
    </lineage>
</organism>
<evidence type="ECO:0000250" key="1"/>
<evidence type="ECO:0000255" key="2"/>
<evidence type="ECO:0000305" key="3"/>
<comment type="function">
    <text evidence="1">Probable gustatory receptor which mediates acceptance or avoidance behavior, depending on its substrates.</text>
</comment>
<comment type="subcellular location">
    <subcellularLocation>
        <location evidence="1">Cell membrane</location>
        <topology evidence="1">Multi-pass membrane protein</topology>
    </subcellularLocation>
</comment>
<comment type="similarity">
    <text evidence="3">Belongs to the insect chemoreceptor superfamily. Gustatory receptor (GR) family. Gr10a subfamily.</text>
</comment>
<proteinExistence type="inferred from homology"/>
<accession>Q9VYZ2</accession>
<reference key="1">
    <citation type="journal article" date="2000" name="Science">
        <title>The genome sequence of Drosophila melanogaster.</title>
        <authorList>
            <person name="Adams M.D."/>
            <person name="Celniker S.E."/>
            <person name="Holt R.A."/>
            <person name="Evans C.A."/>
            <person name="Gocayne J.D."/>
            <person name="Amanatides P.G."/>
            <person name="Scherer S.E."/>
            <person name="Li P.W."/>
            <person name="Hoskins R.A."/>
            <person name="Galle R.F."/>
            <person name="George R.A."/>
            <person name="Lewis S.E."/>
            <person name="Richards S."/>
            <person name="Ashburner M."/>
            <person name="Henderson S.N."/>
            <person name="Sutton G.G."/>
            <person name="Wortman J.R."/>
            <person name="Yandell M.D."/>
            <person name="Zhang Q."/>
            <person name="Chen L.X."/>
            <person name="Brandon R.C."/>
            <person name="Rogers Y.-H.C."/>
            <person name="Blazej R.G."/>
            <person name="Champe M."/>
            <person name="Pfeiffer B.D."/>
            <person name="Wan K.H."/>
            <person name="Doyle C."/>
            <person name="Baxter E.G."/>
            <person name="Helt G."/>
            <person name="Nelson C.R."/>
            <person name="Miklos G.L.G."/>
            <person name="Abril J.F."/>
            <person name="Agbayani A."/>
            <person name="An H.-J."/>
            <person name="Andrews-Pfannkoch C."/>
            <person name="Baldwin D."/>
            <person name="Ballew R.M."/>
            <person name="Basu A."/>
            <person name="Baxendale J."/>
            <person name="Bayraktaroglu L."/>
            <person name="Beasley E.M."/>
            <person name="Beeson K.Y."/>
            <person name="Benos P.V."/>
            <person name="Berman B.P."/>
            <person name="Bhandari D."/>
            <person name="Bolshakov S."/>
            <person name="Borkova D."/>
            <person name="Botchan M.R."/>
            <person name="Bouck J."/>
            <person name="Brokstein P."/>
            <person name="Brottier P."/>
            <person name="Burtis K.C."/>
            <person name="Busam D.A."/>
            <person name="Butler H."/>
            <person name="Cadieu E."/>
            <person name="Center A."/>
            <person name="Chandra I."/>
            <person name="Cherry J.M."/>
            <person name="Cawley S."/>
            <person name="Dahlke C."/>
            <person name="Davenport L.B."/>
            <person name="Davies P."/>
            <person name="de Pablos B."/>
            <person name="Delcher A."/>
            <person name="Deng Z."/>
            <person name="Mays A.D."/>
            <person name="Dew I."/>
            <person name="Dietz S.M."/>
            <person name="Dodson K."/>
            <person name="Doup L.E."/>
            <person name="Downes M."/>
            <person name="Dugan-Rocha S."/>
            <person name="Dunkov B.C."/>
            <person name="Dunn P."/>
            <person name="Durbin K.J."/>
            <person name="Evangelista C.C."/>
            <person name="Ferraz C."/>
            <person name="Ferriera S."/>
            <person name="Fleischmann W."/>
            <person name="Fosler C."/>
            <person name="Gabrielian A.E."/>
            <person name="Garg N.S."/>
            <person name="Gelbart W.M."/>
            <person name="Glasser K."/>
            <person name="Glodek A."/>
            <person name="Gong F."/>
            <person name="Gorrell J.H."/>
            <person name="Gu Z."/>
            <person name="Guan P."/>
            <person name="Harris M."/>
            <person name="Harris N.L."/>
            <person name="Harvey D.A."/>
            <person name="Heiman T.J."/>
            <person name="Hernandez J.R."/>
            <person name="Houck J."/>
            <person name="Hostin D."/>
            <person name="Houston K.A."/>
            <person name="Howland T.J."/>
            <person name="Wei M.-H."/>
            <person name="Ibegwam C."/>
            <person name="Jalali M."/>
            <person name="Kalush F."/>
            <person name="Karpen G.H."/>
            <person name="Ke Z."/>
            <person name="Kennison J.A."/>
            <person name="Ketchum K.A."/>
            <person name="Kimmel B.E."/>
            <person name="Kodira C.D."/>
            <person name="Kraft C.L."/>
            <person name="Kravitz S."/>
            <person name="Kulp D."/>
            <person name="Lai Z."/>
            <person name="Lasko P."/>
            <person name="Lei Y."/>
            <person name="Levitsky A.A."/>
            <person name="Li J.H."/>
            <person name="Li Z."/>
            <person name="Liang Y."/>
            <person name="Lin X."/>
            <person name="Liu X."/>
            <person name="Mattei B."/>
            <person name="McIntosh T.C."/>
            <person name="McLeod M.P."/>
            <person name="McPherson D."/>
            <person name="Merkulov G."/>
            <person name="Milshina N.V."/>
            <person name="Mobarry C."/>
            <person name="Morris J."/>
            <person name="Moshrefi A."/>
            <person name="Mount S.M."/>
            <person name="Moy M."/>
            <person name="Murphy B."/>
            <person name="Murphy L."/>
            <person name="Muzny D.M."/>
            <person name="Nelson D.L."/>
            <person name="Nelson D.R."/>
            <person name="Nelson K.A."/>
            <person name="Nixon K."/>
            <person name="Nusskern D.R."/>
            <person name="Pacleb J.M."/>
            <person name="Palazzolo M."/>
            <person name="Pittman G.S."/>
            <person name="Pan S."/>
            <person name="Pollard J."/>
            <person name="Puri V."/>
            <person name="Reese M.G."/>
            <person name="Reinert K."/>
            <person name="Remington K."/>
            <person name="Saunders R.D.C."/>
            <person name="Scheeler F."/>
            <person name="Shen H."/>
            <person name="Shue B.C."/>
            <person name="Siden-Kiamos I."/>
            <person name="Simpson M."/>
            <person name="Skupski M.P."/>
            <person name="Smith T.J."/>
            <person name="Spier E."/>
            <person name="Spradling A.C."/>
            <person name="Stapleton M."/>
            <person name="Strong R."/>
            <person name="Sun E."/>
            <person name="Svirskas R."/>
            <person name="Tector C."/>
            <person name="Turner R."/>
            <person name="Venter E."/>
            <person name="Wang A.H."/>
            <person name="Wang X."/>
            <person name="Wang Z.-Y."/>
            <person name="Wassarman D.A."/>
            <person name="Weinstock G.M."/>
            <person name="Weissenbach J."/>
            <person name="Williams S.M."/>
            <person name="Woodage T."/>
            <person name="Worley K.C."/>
            <person name="Wu D."/>
            <person name="Yang S."/>
            <person name="Yao Q.A."/>
            <person name="Ye J."/>
            <person name="Yeh R.-F."/>
            <person name="Zaveri J.S."/>
            <person name="Zhan M."/>
            <person name="Zhang G."/>
            <person name="Zhao Q."/>
            <person name="Zheng L."/>
            <person name="Zheng X.H."/>
            <person name="Zhong F.N."/>
            <person name="Zhong W."/>
            <person name="Zhou X."/>
            <person name="Zhu S.C."/>
            <person name="Zhu X."/>
            <person name="Smith H.O."/>
            <person name="Gibbs R.A."/>
            <person name="Myers E.W."/>
            <person name="Rubin G.M."/>
            <person name="Venter J.C."/>
        </authorList>
    </citation>
    <scope>NUCLEOTIDE SEQUENCE [LARGE SCALE GENOMIC DNA]</scope>
    <source>
        <strain>Berkeley</strain>
    </source>
</reference>
<reference key="2">
    <citation type="journal article" date="2002" name="Genome Biol.">
        <title>Annotation of the Drosophila melanogaster euchromatic genome: a systematic review.</title>
        <authorList>
            <person name="Misra S."/>
            <person name="Crosby M.A."/>
            <person name="Mungall C.J."/>
            <person name="Matthews B.B."/>
            <person name="Campbell K.S."/>
            <person name="Hradecky P."/>
            <person name="Huang Y."/>
            <person name="Kaminker J.S."/>
            <person name="Millburn G.H."/>
            <person name="Prochnik S.E."/>
            <person name="Smith C.D."/>
            <person name="Tupy J.L."/>
            <person name="Whitfield E.J."/>
            <person name="Bayraktaroglu L."/>
            <person name="Berman B.P."/>
            <person name="Bettencourt B.R."/>
            <person name="Celniker S.E."/>
            <person name="de Grey A.D.N.J."/>
            <person name="Drysdale R.A."/>
            <person name="Harris N.L."/>
            <person name="Richter J."/>
            <person name="Russo S."/>
            <person name="Schroeder A.J."/>
            <person name="Shu S.Q."/>
            <person name="Stapleton M."/>
            <person name="Yamada C."/>
            <person name="Ashburner M."/>
            <person name="Gelbart W.M."/>
            <person name="Rubin G.M."/>
            <person name="Lewis S.E."/>
        </authorList>
    </citation>
    <scope>GENOME REANNOTATION</scope>
    <source>
        <strain>Berkeley</strain>
    </source>
</reference>
<dbReference type="EMBL" id="AE014298">
    <property type="protein sequence ID" value="AAF48041.1"/>
    <property type="molecule type" value="Genomic_DNA"/>
</dbReference>
<dbReference type="RefSeq" id="NP_511121.1">
    <property type="nucleotide sequence ID" value="NM_078566.4"/>
</dbReference>
<dbReference type="SMR" id="Q9VYZ2"/>
<dbReference type="FunCoup" id="Q9VYZ2">
    <property type="interactions" value="6"/>
</dbReference>
<dbReference type="STRING" id="7227.FBpp0073395"/>
<dbReference type="PaxDb" id="7227-FBpp0073395"/>
<dbReference type="DNASU" id="32085"/>
<dbReference type="EnsemblMetazoa" id="FBtr0073550">
    <property type="protein sequence ID" value="FBpp0073395"/>
    <property type="gene ID" value="FBgn0030297"/>
</dbReference>
<dbReference type="GeneID" id="32085"/>
<dbReference type="KEGG" id="dme:Dmel_CG12622"/>
<dbReference type="AGR" id="FB:FBgn0030297"/>
<dbReference type="CTD" id="32085"/>
<dbReference type="FlyBase" id="FBgn0030297">
    <property type="gene designation" value="Gr10b"/>
</dbReference>
<dbReference type="VEuPathDB" id="VectorBase:FBgn0030297"/>
<dbReference type="eggNOG" id="ENOG502T8PX">
    <property type="taxonomic scope" value="Eukaryota"/>
</dbReference>
<dbReference type="HOGENOM" id="CLU_742431_0_0_1"/>
<dbReference type="InParanoid" id="Q9VYZ2"/>
<dbReference type="OMA" id="QWEMSVL"/>
<dbReference type="OrthoDB" id="7863234at2759"/>
<dbReference type="PhylomeDB" id="Q9VYZ2"/>
<dbReference type="BioGRID-ORCS" id="32085">
    <property type="hits" value="0 hits in 1 CRISPR screen"/>
</dbReference>
<dbReference type="GenomeRNAi" id="32085"/>
<dbReference type="PRO" id="PR:Q9VYZ2"/>
<dbReference type="Proteomes" id="UP000000803">
    <property type="component" value="Chromosome X"/>
</dbReference>
<dbReference type="ExpressionAtlas" id="Q9VYZ2">
    <property type="expression patterns" value="baseline and differential"/>
</dbReference>
<dbReference type="GO" id="GO:0030424">
    <property type="term" value="C:axon"/>
    <property type="evidence" value="ECO:0000318"/>
    <property type="project" value="GO_Central"/>
</dbReference>
<dbReference type="GO" id="GO:0030425">
    <property type="term" value="C:dendrite"/>
    <property type="evidence" value="ECO:0000318"/>
    <property type="project" value="GO_Central"/>
</dbReference>
<dbReference type="GO" id="GO:0043025">
    <property type="term" value="C:neuronal cell body"/>
    <property type="evidence" value="ECO:0000318"/>
    <property type="project" value="GO_Central"/>
</dbReference>
<dbReference type="GO" id="GO:0005886">
    <property type="term" value="C:plasma membrane"/>
    <property type="evidence" value="ECO:0000250"/>
    <property type="project" value="FlyBase"/>
</dbReference>
<dbReference type="GO" id="GO:0015276">
    <property type="term" value="F:ligand-gated monoatomic ion channel activity"/>
    <property type="evidence" value="ECO:0000250"/>
    <property type="project" value="FlyBase"/>
</dbReference>
<dbReference type="GO" id="GO:0007635">
    <property type="term" value="P:chemosensory behavior"/>
    <property type="evidence" value="ECO:0000318"/>
    <property type="project" value="GO_Central"/>
</dbReference>
<dbReference type="GO" id="GO:0008049">
    <property type="term" value="P:male courtship behavior"/>
    <property type="evidence" value="ECO:0000318"/>
    <property type="project" value="GO_Central"/>
</dbReference>
<dbReference type="GO" id="GO:0034220">
    <property type="term" value="P:monoatomic ion transmembrane transport"/>
    <property type="evidence" value="ECO:0000250"/>
    <property type="project" value="FlyBase"/>
</dbReference>
<dbReference type="GO" id="GO:0050909">
    <property type="term" value="P:sensory perception of taste"/>
    <property type="evidence" value="ECO:0007669"/>
    <property type="project" value="InterPro"/>
</dbReference>
<dbReference type="GO" id="GO:0007165">
    <property type="term" value="P:signal transduction"/>
    <property type="evidence" value="ECO:0007669"/>
    <property type="project" value="UniProtKB-KW"/>
</dbReference>
<dbReference type="InterPro" id="IPR013604">
    <property type="entry name" value="7TM_chemorcpt"/>
</dbReference>
<dbReference type="Pfam" id="PF08395">
    <property type="entry name" value="7tm_7"/>
    <property type="match status" value="1"/>
</dbReference>
<sequence>MRVGKLCRLALRFWMGLILVLGFSSHYYNPTRRRLVYSRILQTYDWLLMVINLGAFYLYYRYAMTYFLEGMFRRQGFVNQVSTCNVFQQLLMAVTGTWLHFLFERHVCQTYNELSRILKHDLKLKEHSRFYCLAFLAKVYNFFHNFNFALSAIMHWGLRPFNVWDLLANLYFVYNSLARDAILVAYVLLLLNLSEALRLNGQQEHDTYSDLMKQLRRRERLLRIGRRVHRMFAWLVAIALIYLVFFNTATIYLGYTMFIQKHDALGLRGRGLKMLLTVVSFLVILWDVVLLQVICEKLLAEENKICDCPEDVASSRTTYRQWEMSALRRAITRSSPENNVLGMFRMDMRCAFALISCSLSYGIIIIQIGYIPG</sequence>
<keyword id="KW-1003">Cell membrane</keyword>
<keyword id="KW-0472">Membrane</keyword>
<keyword id="KW-0675">Receptor</keyword>
<keyword id="KW-1185">Reference proteome</keyword>
<keyword id="KW-0807">Transducer</keyword>
<keyword id="KW-0812">Transmembrane</keyword>
<keyword id="KW-1133">Transmembrane helix</keyword>